<keyword id="KW-0312">Gluconeogenesis</keyword>
<keyword id="KW-0324">Glycolysis</keyword>
<keyword id="KW-0413">Isomerase</keyword>
<keyword id="KW-1185">Reference proteome</keyword>
<organism>
    <name type="scientific">Corynebacterium jeikeium (strain K411)</name>
    <dbReference type="NCBI Taxonomy" id="306537"/>
    <lineage>
        <taxon>Bacteria</taxon>
        <taxon>Bacillati</taxon>
        <taxon>Actinomycetota</taxon>
        <taxon>Actinomycetes</taxon>
        <taxon>Mycobacteriales</taxon>
        <taxon>Corynebacteriaceae</taxon>
        <taxon>Corynebacterium</taxon>
    </lineage>
</organism>
<gene>
    <name evidence="1" type="primary">gpmA</name>
    <name type="ordered locus">jk1912</name>
</gene>
<accession>Q4JSW4</accession>
<comment type="function">
    <text evidence="1">Catalyzes the interconversion of 2-phosphoglycerate and 3-phosphoglycerate.</text>
</comment>
<comment type="catalytic activity">
    <reaction evidence="1">
        <text>(2R)-2-phosphoglycerate = (2R)-3-phosphoglycerate</text>
        <dbReference type="Rhea" id="RHEA:15901"/>
        <dbReference type="ChEBI" id="CHEBI:58272"/>
        <dbReference type="ChEBI" id="CHEBI:58289"/>
        <dbReference type="EC" id="5.4.2.11"/>
    </reaction>
</comment>
<comment type="pathway">
    <text evidence="1">Carbohydrate degradation; glycolysis; pyruvate from D-glyceraldehyde 3-phosphate: step 3/5.</text>
</comment>
<comment type="similarity">
    <text evidence="1">Belongs to the phosphoglycerate mutase family. BPG-dependent PGAM subfamily.</text>
</comment>
<reference key="1">
    <citation type="journal article" date="2005" name="J. Bacteriol.">
        <title>Complete genome sequence and analysis of the multiresistant nosocomial pathogen Corynebacterium jeikeium K411, a lipid-requiring bacterium of the human skin flora.</title>
        <authorList>
            <person name="Tauch A."/>
            <person name="Kaiser O."/>
            <person name="Hain T."/>
            <person name="Goesmann A."/>
            <person name="Weisshaar B."/>
            <person name="Albersmeier A."/>
            <person name="Bekel T."/>
            <person name="Bischoff N."/>
            <person name="Brune I."/>
            <person name="Chakraborty T."/>
            <person name="Kalinowski J."/>
            <person name="Meyer F."/>
            <person name="Rupp O."/>
            <person name="Schneiker S."/>
            <person name="Viehoever P."/>
            <person name="Puehler A."/>
        </authorList>
    </citation>
    <scope>NUCLEOTIDE SEQUENCE [LARGE SCALE GENOMIC DNA]</scope>
    <source>
        <strain>K411</strain>
    </source>
</reference>
<protein>
    <recommendedName>
        <fullName evidence="1">2,3-bisphosphoglycerate-dependent phosphoglycerate mutase</fullName>
        <shortName evidence="1">BPG-dependent PGAM</shortName>
        <shortName evidence="1">PGAM</shortName>
        <shortName evidence="1">Phosphoglyceromutase</shortName>
        <shortName evidence="1">dPGM</shortName>
        <ecNumber evidence="1">5.4.2.11</ecNumber>
    </recommendedName>
</protein>
<evidence type="ECO:0000255" key="1">
    <source>
        <dbReference type="HAMAP-Rule" id="MF_01039"/>
    </source>
</evidence>
<dbReference type="EC" id="5.4.2.11" evidence="1"/>
<dbReference type="EMBL" id="CR931997">
    <property type="protein sequence ID" value="CAI38093.1"/>
    <property type="molecule type" value="Genomic_DNA"/>
</dbReference>
<dbReference type="RefSeq" id="WP_005292152.1">
    <property type="nucleotide sequence ID" value="NC_007164.1"/>
</dbReference>
<dbReference type="SMR" id="Q4JSW4"/>
<dbReference type="STRING" id="306537.jk1912"/>
<dbReference type="GeneID" id="92739541"/>
<dbReference type="KEGG" id="cjk:jk1912"/>
<dbReference type="eggNOG" id="COG0588">
    <property type="taxonomic scope" value="Bacteria"/>
</dbReference>
<dbReference type="HOGENOM" id="CLU_033323_1_1_11"/>
<dbReference type="OrthoDB" id="9781415at2"/>
<dbReference type="UniPathway" id="UPA00109">
    <property type="reaction ID" value="UER00186"/>
</dbReference>
<dbReference type="Proteomes" id="UP000000545">
    <property type="component" value="Chromosome"/>
</dbReference>
<dbReference type="GO" id="GO:0004619">
    <property type="term" value="F:phosphoglycerate mutase activity"/>
    <property type="evidence" value="ECO:0007669"/>
    <property type="project" value="UniProtKB-EC"/>
</dbReference>
<dbReference type="GO" id="GO:0006094">
    <property type="term" value="P:gluconeogenesis"/>
    <property type="evidence" value="ECO:0007669"/>
    <property type="project" value="UniProtKB-UniRule"/>
</dbReference>
<dbReference type="GO" id="GO:0006096">
    <property type="term" value="P:glycolytic process"/>
    <property type="evidence" value="ECO:0007669"/>
    <property type="project" value="UniProtKB-UniRule"/>
</dbReference>
<dbReference type="CDD" id="cd07067">
    <property type="entry name" value="HP_PGM_like"/>
    <property type="match status" value="1"/>
</dbReference>
<dbReference type="FunFam" id="3.40.50.1240:FF:000003">
    <property type="entry name" value="2,3-bisphosphoglycerate-dependent phosphoglycerate mutase"/>
    <property type="match status" value="1"/>
</dbReference>
<dbReference type="Gene3D" id="3.40.50.1240">
    <property type="entry name" value="Phosphoglycerate mutase-like"/>
    <property type="match status" value="1"/>
</dbReference>
<dbReference type="HAMAP" id="MF_01039">
    <property type="entry name" value="PGAM_GpmA"/>
    <property type="match status" value="1"/>
</dbReference>
<dbReference type="InterPro" id="IPR013078">
    <property type="entry name" value="His_Pase_superF_clade-1"/>
</dbReference>
<dbReference type="InterPro" id="IPR029033">
    <property type="entry name" value="His_PPase_superfam"/>
</dbReference>
<dbReference type="InterPro" id="IPR001345">
    <property type="entry name" value="PG/BPGM_mutase_AS"/>
</dbReference>
<dbReference type="InterPro" id="IPR005952">
    <property type="entry name" value="Phosphogly_mut1"/>
</dbReference>
<dbReference type="NCBIfam" id="TIGR01258">
    <property type="entry name" value="pgm_1"/>
    <property type="match status" value="1"/>
</dbReference>
<dbReference type="NCBIfam" id="NF010713">
    <property type="entry name" value="PRK14115.1"/>
    <property type="match status" value="1"/>
</dbReference>
<dbReference type="NCBIfam" id="NF010718">
    <property type="entry name" value="PRK14120.1"/>
    <property type="match status" value="1"/>
</dbReference>
<dbReference type="PANTHER" id="PTHR11931">
    <property type="entry name" value="PHOSPHOGLYCERATE MUTASE"/>
    <property type="match status" value="1"/>
</dbReference>
<dbReference type="Pfam" id="PF00300">
    <property type="entry name" value="His_Phos_1"/>
    <property type="match status" value="1"/>
</dbReference>
<dbReference type="PIRSF" id="PIRSF000709">
    <property type="entry name" value="6PFK_2-Ptase"/>
    <property type="match status" value="1"/>
</dbReference>
<dbReference type="SMART" id="SM00855">
    <property type="entry name" value="PGAM"/>
    <property type="match status" value="1"/>
</dbReference>
<dbReference type="SUPFAM" id="SSF53254">
    <property type="entry name" value="Phosphoglycerate mutase-like"/>
    <property type="match status" value="1"/>
</dbReference>
<dbReference type="PROSITE" id="PS00175">
    <property type="entry name" value="PG_MUTASE"/>
    <property type="match status" value="1"/>
</dbReference>
<name>GPMA_CORJK</name>
<feature type="chain" id="PRO_0000229118" description="2,3-bisphosphoglycerate-dependent phosphoglycerate mutase">
    <location>
        <begin position="1"/>
        <end position="254"/>
    </location>
</feature>
<feature type="active site" description="Tele-phosphohistidine intermediate" evidence="1">
    <location>
        <position position="16"/>
    </location>
</feature>
<feature type="active site" description="Proton donor/acceptor" evidence="1">
    <location>
        <position position="94"/>
    </location>
</feature>
<feature type="binding site" evidence="1">
    <location>
        <begin position="15"/>
        <end position="22"/>
    </location>
    <ligand>
        <name>substrate</name>
    </ligand>
</feature>
<feature type="binding site" evidence="1">
    <location>
        <begin position="28"/>
        <end position="29"/>
    </location>
    <ligand>
        <name>substrate</name>
    </ligand>
</feature>
<feature type="binding site" evidence="1">
    <location>
        <position position="67"/>
    </location>
    <ligand>
        <name>substrate</name>
    </ligand>
</feature>
<feature type="binding site" evidence="1">
    <location>
        <begin position="94"/>
        <end position="97"/>
    </location>
    <ligand>
        <name>substrate</name>
    </ligand>
</feature>
<feature type="binding site" evidence="1">
    <location>
        <position position="105"/>
    </location>
    <ligand>
        <name>substrate</name>
    </ligand>
</feature>
<feature type="binding site" evidence="1">
    <location>
        <begin position="121"/>
        <end position="122"/>
    </location>
    <ligand>
        <name>substrate</name>
    </ligand>
</feature>
<feature type="binding site" evidence="1">
    <location>
        <begin position="188"/>
        <end position="189"/>
    </location>
    <ligand>
        <name>substrate</name>
    </ligand>
</feature>
<feature type="site" description="Transition state stabilizer" evidence="1">
    <location>
        <position position="187"/>
    </location>
</feature>
<proteinExistence type="inferred from homology"/>
<sequence>MSEQNNSHGNLILLRHGQSEWNASNQFTGWVDVRLTEKGRAEAVRGGEMIKEAGLEPTILYTSLLRRAITTANIALDAADRHWIPVVRDWRLNERHYGALQGLNKAETKDKYGEEQFMAWRRSYDTPPPAIDADNEYAQTNDPRYADLSEIPATECLLDVVKRFIPYYEEEIEPRVKNGETVLVAAHGNSLRALVKHLDKISDEDIAGLNIPTGIPLVYNIDADGKVLNPGGDYLDPEAAAAGAAAVAAQGQAK</sequence>